<reference key="1">
    <citation type="journal article" date="2007" name="Nat. Biotechnol.">
        <title>Genome sequence and identification of candidate vaccine antigens from the animal pathogen Dichelobacter nodosus.</title>
        <authorList>
            <person name="Myers G.S.A."/>
            <person name="Parker D."/>
            <person name="Al-Hasani K."/>
            <person name="Kennan R.M."/>
            <person name="Seemann T."/>
            <person name="Ren Q."/>
            <person name="Badger J.H."/>
            <person name="Selengut J.D."/>
            <person name="Deboy R.T."/>
            <person name="Tettelin H."/>
            <person name="Boyce J.D."/>
            <person name="McCarl V.P."/>
            <person name="Han X."/>
            <person name="Nelson W.C."/>
            <person name="Madupu R."/>
            <person name="Mohamoud Y."/>
            <person name="Holley T."/>
            <person name="Fedorova N."/>
            <person name="Khouri H."/>
            <person name="Bottomley S.P."/>
            <person name="Whittington R.J."/>
            <person name="Adler B."/>
            <person name="Songer J.G."/>
            <person name="Rood J.I."/>
            <person name="Paulsen I.T."/>
        </authorList>
    </citation>
    <scope>NUCLEOTIDE SEQUENCE [LARGE SCALE GENOMIC DNA]</scope>
    <source>
        <strain>VCS1703A</strain>
    </source>
</reference>
<evidence type="ECO:0000255" key="1">
    <source>
        <dbReference type="HAMAP-Rule" id="MF_00113"/>
    </source>
</evidence>
<dbReference type="EC" id="2.4.99.17" evidence="1"/>
<dbReference type="EMBL" id="CP000513">
    <property type="protein sequence ID" value="ABQ13744.1"/>
    <property type="molecule type" value="Genomic_DNA"/>
</dbReference>
<dbReference type="RefSeq" id="WP_011927785.1">
    <property type="nucleotide sequence ID" value="NC_009446.1"/>
</dbReference>
<dbReference type="SMR" id="A5EWY6"/>
<dbReference type="STRING" id="246195.DNO_0026"/>
<dbReference type="KEGG" id="dno:DNO_0026"/>
<dbReference type="eggNOG" id="COG0809">
    <property type="taxonomic scope" value="Bacteria"/>
</dbReference>
<dbReference type="HOGENOM" id="CLU_039110_1_0_6"/>
<dbReference type="OrthoDB" id="9805933at2"/>
<dbReference type="UniPathway" id="UPA00392"/>
<dbReference type="Proteomes" id="UP000000248">
    <property type="component" value="Chromosome"/>
</dbReference>
<dbReference type="GO" id="GO:0005737">
    <property type="term" value="C:cytoplasm"/>
    <property type="evidence" value="ECO:0007669"/>
    <property type="project" value="UniProtKB-SubCell"/>
</dbReference>
<dbReference type="GO" id="GO:0051075">
    <property type="term" value="F:S-adenosylmethionine:tRNA ribosyltransferase-isomerase activity"/>
    <property type="evidence" value="ECO:0007669"/>
    <property type="project" value="UniProtKB-EC"/>
</dbReference>
<dbReference type="GO" id="GO:0008616">
    <property type="term" value="P:queuosine biosynthetic process"/>
    <property type="evidence" value="ECO:0007669"/>
    <property type="project" value="UniProtKB-UniRule"/>
</dbReference>
<dbReference type="GO" id="GO:0002099">
    <property type="term" value="P:tRNA wobble guanine modification"/>
    <property type="evidence" value="ECO:0007669"/>
    <property type="project" value="TreeGrafter"/>
</dbReference>
<dbReference type="FunFam" id="3.40.1780.10:FF:000001">
    <property type="entry name" value="S-adenosylmethionine:tRNA ribosyltransferase-isomerase"/>
    <property type="match status" value="1"/>
</dbReference>
<dbReference type="Gene3D" id="2.40.10.240">
    <property type="entry name" value="QueA-like"/>
    <property type="match status" value="1"/>
</dbReference>
<dbReference type="Gene3D" id="3.40.1780.10">
    <property type="entry name" value="QueA-like"/>
    <property type="match status" value="1"/>
</dbReference>
<dbReference type="HAMAP" id="MF_00113">
    <property type="entry name" value="QueA"/>
    <property type="match status" value="1"/>
</dbReference>
<dbReference type="InterPro" id="IPR003699">
    <property type="entry name" value="QueA"/>
</dbReference>
<dbReference type="InterPro" id="IPR042118">
    <property type="entry name" value="QueA_dom1"/>
</dbReference>
<dbReference type="InterPro" id="IPR042119">
    <property type="entry name" value="QueA_dom2"/>
</dbReference>
<dbReference type="InterPro" id="IPR036100">
    <property type="entry name" value="QueA_sf"/>
</dbReference>
<dbReference type="NCBIfam" id="NF001140">
    <property type="entry name" value="PRK00147.1"/>
    <property type="match status" value="1"/>
</dbReference>
<dbReference type="NCBIfam" id="TIGR00113">
    <property type="entry name" value="queA"/>
    <property type="match status" value="1"/>
</dbReference>
<dbReference type="PANTHER" id="PTHR30307">
    <property type="entry name" value="S-ADENOSYLMETHIONINE:TRNA RIBOSYLTRANSFERASE-ISOMERASE"/>
    <property type="match status" value="1"/>
</dbReference>
<dbReference type="PANTHER" id="PTHR30307:SF0">
    <property type="entry name" value="S-ADENOSYLMETHIONINE:TRNA RIBOSYLTRANSFERASE-ISOMERASE"/>
    <property type="match status" value="1"/>
</dbReference>
<dbReference type="Pfam" id="PF02547">
    <property type="entry name" value="Queuosine_synth"/>
    <property type="match status" value="1"/>
</dbReference>
<dbReference type="SUPFAM" id="SSF111337">
    <property type="entry name" value="QueA-like"/>
    <property type="match status" value="1"/>
</dbReference>
<gene>
    <name evidence="1" type="primary">queA</name>
    <name type="ordered locus">DNO_0026</name>
</gene>
<sequence length="354" mass="39472">MQHTLKKSDFFYELPEHLIARYPLQNRSDSRLLVAAVESAQKVHISNKQMIDFIDFLKPEDLLVINNTRVVPARMFGHKISGGKVEVFIERLLSEQRVKAHIRASKAPLLGSQIVIGAQKVTIEDKKDGIYTVFSEMPWTKLMAQQGKMPIPPYLARDAEALDSERYQTVYAQIAGAVAAPTAGLHFDQKLLERIAAKGVKRAAITLHVGAGTFQPVRVENLNEHVMHQEWFSLSQEVVDAVAACRAQNGRVIAIGTTALRALESAAIGSGKVGVFQGDTDLFITPGYEFQVVDALFTNFHLPESTLLMLVSAFAGVNNIRRIYQHAITEQYRFFSYGDAMFLPHRLPALETLL</sequence>
<name>QUEA_DICNV</name>
<keyword id="KW-0963">Cytoplasm</keyword>
<keyword id="KW-0671">Queuosine biosynthesis</keyword>
<keyword id="KW-1185">Reference proteome</keyword>
<keyword id="KW-0949">S-adenosyl-L-methionine</keyword>
<keyword id="KW-0808">Transferase</keyword>
<feature type="chain" id="PRO_1000015208" description="S-adenosylmethionine:tRNA ribosyltransferase-isomerase">
    <location>
        <begin position="1"/>
        <end position="354"/>
    </location>
</feature>
<proteinExistence type="inferred from homology"/>
<comment type="function">
    <text evidence="1">Transfers and isomerizes the ribose moiety from AdoMet to the 7-aminomethyl group of 7-deazaguanine (preQ1-tRNA) to give epoxyqueuosine (oQ-tRNA).</text>
</comment>
<comment type="catalytic activity">
    <reaction evidence="1">
        <text>7-aminomethyl-7-carbaguanosine(34) in tRNA + S-adenosyl-L-methionine = epoxyqueuosine(34) in tRNA + adenine + L-methionine + 2 H(+)</text>
        <dbReference type="Rhea" id="RHEA:32155"/>
        <dbReference type="Rhea" id="RHEA-COMP:10342"/>
        <dbReference type="Rhea" id="RHEA-COMP:18582"/>
        <dbReference type="ChEBI" id="CHEBI:15378"/>
        <dbReference type="ChEBI" id="CHEBI:16708"/>
        <dbReference type="ChEBI" id="CHEBI:57844"/>
        <dbReference type="ChEBI" id="CHEBI:59789"/>
        <dbReference type="ChEBI" id="CHEBI:82833"/>
        <dbReference type="ChEBI" id="CHEBI:194443"/>
        <dbReference type="EC" id="2.4.99.17"/>
    </reaction>
</comment>
<comment type="pathway">
    <text evidence="1">tRNA modification; tRNA-queuosine biosynthesis.</text>
</comment>
<comment type="subunit">
    <text evidence="1">Monomer.</text>
</comment>
<comment type="subcellular location">
    <subcellularLocation>
        <location evidence="1">Cytoplasm</location>
    </subcellularLocation>
</comment>
<comment type="similarity">
    <text evidence="1">Belongs to the QueA family.</text>
</comment>
<organism>
    <name type="scientific">Dichelobacter nodosus (strain VCS1703A)</name>
    <dbReference type="NCBI Taxonomy" id="246195"/>
    <lineage>
        <taxon>Bacteria</taxon>
        <taxon>Pseudomonadati</taxon>
        <taxon>Pseudomonadota</taxon>
        <taxon>Gammaproteobacteria</taxon>
        <taxon>Cardiobacteriales</taxon>
        <taxon>Cardiobacteriaceae</taxon>
        <taxon>Dichelobacter</taxon>
    </lineage>
</organism>
<protein>
    <recommendedName>
        <fullName evidence="1">S-adenosylmethionine:tRNA ribosyltransferase-isomerase</fullName>
        <ecNumber evidence="1">2.4.99.17</ecNumber>
    </recommendedName>
    <alternativeName>
        <fullName evidence="1">Queuosine biosynthesis protein QueA</fullName>
    </alternativeName>
</protein>
<accession>A5EWY6</accession>